<accession>Q3Z4V2</accession>
<protein>
    <recommendedName>
        <fullName evidence="1">HMP-PP phosphatase</fullName>
        <ecNumber evidence="1">3.6.1.-</ecNumber>
    </recommendedName>
</protein>
<evidence type="ECO:0000255" key="1">
    <source>
        <dbReference type="HAMAP-Rule" id="MF_01847"/>
    </source>
</evidence>
<evidence type="ECO:0000305" key="2"/>
<dbReference type="EC" id="3.6.1.-" evidence="1"/>
<dbReference type="EMBL" id="CP000038">
    <property type="protein sequence ID" value="AAZ87210.1"/>
    <property type="status" value="ALT_INIT"/>
    <property type="molecule type" value="Genomic_DNA"/>
</dbReference>
<dbReference type="RefSeq" id="WP_000113027.1">
    <property type="nucleotide sequence ID" value="NC_007384.1"/>
</dbReference>
<dbReference type="SMR" id="Q3Z4V2"/>
<dbReference type="GeneID" id="93777004"/>
<dbReference type="KEGG" id="ssn:SSON_0434"/>
<dbReference type="HOGENOM" id="CLU_044146_5_2_6"/>
<dbReference type="Proteomes" id="UP000002529">
    <property type="component" value="Chromosome"/>
</dbReference>
<dbReference type="GO" id="GO:0002145">
    <property type="term" value="F:4-amino-5-hydroxymethyl-2-methylpyrimidine diphosphatase activity"/>
    <property type="evidence" value="ECO:0007669"/>
    <property type="project" value="RHEA"/>
</dbReference>
<dbReference type="GO" id="GO:0000287">
    <property type="term" value="F:magnesium ion binding"/>
    <property type="evidence" value="ECO:0000250"/>
    <property type="project" value="UniProtKB"/>
</dbReference>
<dbReference type="GO" id="GO:0016791">
    <property type="term" value="F:phosphatase activity"/>
    <property type="evidence" value="ECO:0000250"/>
    <property type="project" value="UniProtKB"/>
</dbReference>
<dbReference type="CDD" id="cd07516">
    <property type="entry name" value="HAD_Pase"/>
    <property type="match status" value="1"/>
</dbReference>
<dbReference type="FunFam" id="3.30.1240.10:FF:000002">
    <property type="entry name" value="HMP-PP phosphatase"/>
    <property type="match status" value="1"/>
</dbReference>
<dbReference type="Gene3D" id="3.30.1240.10">
    <property type="match status" value="1"/>
</dbReference>
<dbReference type="Gene3D" id="3.40.50.1000">
    <property type="entry name" value="HAD superfamily/HAD-like"/>
    <property type="match status" value="1"/>
</dbReference>
<dbReference type="HAMAP" id="MF_01847">
    <property type="entry name" value="HMP_PP_phosphat"/>
    <property type="match status" value="1"/>
</dbReference>
<dbReference type="InterPro" id="IPR000150">
    <property type="entry name" value="Cof"/>
</dbReference>
<dbReference type="InterPro" id="IPR036412">
    <property type="entry name" value="HAD-like_sf"/>
</dbReference>
<dbReference type="InterPro" id="IPR006379">
    <property type="entry name" value="HAD-SF_hydro_IIB"/>
</dbReference>
<dbReference type="InterPro" id="IPR023214">
    <property type="entry name" value="HAD_sf"/>
</dbReference>
<dbReference type="InterPro" id="IPR023938">
    <property type="entry name" value="HMP-PP_phosphatase"/>
</dbReference>
<dbReference type="NCBIfam" id="TIGR00099">
    <property type="entry name" value="Cof-subfamily"/>
    <property type="match status" value="1"/>
</dbReference>
<dbReference type="NCBIfam" id="TIGR01484">
    <property type="entry name" value="HAD-SF-IIB"/>
    <property type="match status" value="1"/>
</dbReference>
<dbReference type="NCBIfam" id="NF011705">
    <property type="entry name" value="PRK15126.1"/>
    <property type="match status" value="1"/>
</dbReference>
<dbReference type="PANTHER" id="PTHR47267">
    <property type="match status" value="1"/>
</dbReference>
<dbReference type="PANTHER" id="PTHR47267:SF2">
    <property type="entry name" value="HMP-PP PHOSPHATASE"/>
    <property type="match status" value="1"/>
</dbReference>
<dbReference type="Pfam" id="PF08282">
    <property type="entry name" value="Hydrolase_3"/>
    <property type="match status" value="1"/>
</dbReference>
<dbReference type="SFLD" id="SFLDG01140">
    <property type="entry name" value="C2.B:_Phosphomannomutase_and_P"/>
    <property type="match status" value="1"/>
</dbReference>
<dbReference type="SFLD" id="SFLDS00003">
    <property type="entry name" value="Haloacid_Dehalogenase"/>
    <property type="match status" value="1"/>
</dbReference>
<dbReference type="SUPFAM" id="SSF56784">
    <property type="entry name" value="HAD-like"/>
    <property type="match status" value="1"/>
</dbReference>
<dbReference type="PROSITE" id="PS01228">
    <property type="entry name" value="COF_1"/>
    <property type="match status" value="1"/>
</dbReference>
<dbReference type="PROSITE" id="PS01229">
    <property type="entry name" value="COF_2"/>
    <property type="match status" value="1"/>
</dbReference>
<proteinExistence type="inferred from homology"/>
<gene>
    <name evidence="1" type="primary">cof</name>
    <name type="ordered locus">SSON_0434</name>
</gene>
<feature type="chain" id="PRO_0000342999" description="HMP-PP phosphatase">
    <location>
        <begin position="1"/>
        <end position="272"/>
    </location>
</feature>
<feature type="active site" description="Nucleophile" evidence="1">
    <location>
        <position position="8"/>
    </location>
</feature>
<feature type="binding site" evidence="1">
    <location>
        <position position="8"/>
    </location>
    <ligand>
        <name>Mg(2+)</name>
        <dbReference type="ChEBI" id="CHEBI:18420"/>
    </ligand>
</feature>
<feature type="binding site" evidence="1">
    <location>
        <position position="10"/>
    </location>
    <ligand>
        <name>Mg(2+)</name>
        <dbReference type="ChEBI" id="CHEBI:18420"/>
    </ligand>
</feature>
<feature type="binding site" evidence="1">
    <location>
        <position position="212"/>
    </location>
    <ligand>
        <name>Mg(2+)</name>
        <dbReference type="ChEBI" id="CHEBI:18420"/>
    </ligand>
</feature>
<name>COF_SHISS</name>
<organism>
    <name type="scientific">Shigella sonnei (strain Ss046)</name>
    <dbReference type="NCBI Taxonomy" id="300269"/>
    <lineage>
        <taxon>Bacteria</taxon>
        <taxon>Pseudomonadati</taxon>
        <taxon>Pseudomonadota</taxon>
        <taxon>Gammaproteobacteria</taxon>
        <taxon>Enterobacterales</taxon>
        <taxon>Enterobacteriaceae</taxon>
        <taxon>Shigella</taxon>
    </lineage>
</organism>
<comment type="function">
    <text evidence="1">Catalyzes the hydrolysis of 4-amino-2-methyl-5-hydroxymethylpyrimidine pyrophosphate (HMP-PP) to 4-amino-2-methyl-5-hydroxymethylpyrimidine phosphate (HMP-P).</text>
</comment>
<comment type="catalytic activity">
    <reaction evidence="1">
        <text>4-amino-2-methyl-5-(diphosphooxymethyl)pyrimidine + H2O = 4-amino-2-methyl-5-(phosphooxymethyl)pyrimidine + phosphate + H(+)</text>
        <dbReference type="Rhea" id="RHEA:27914"/>
        <dbReference type="ChEBI" id="CHEBI:15377"/>
        <dbReference type="ChEBI" id="CHEBI:15378"/>
        <dbReference type="ChEBI" id="CHEBI:43474"/>
        <dbReference type="ChEBI" id="CHEBI:57841"/>
        <dbReference type="ChEBI" id="CHEBI:58354"/>
    </reaction>
</comment>
<comment type="cofactor">
    <cofactor evidence="1">
        <name>Mg(2+)</name>
        <dbReference type="ChEBI" id="CHEBI:18420"/>
    </cofactor>
</comment>
<comment type="similarity">
    <text evidence="1">Belongs to the HAD-like hydrolase superfamily. Cof family.</text>
</comment>
<comment type="sequence caution" evidence="2">
    <conflict type="erroneous initiation">
        <sequence resource="EMBL-CDS" id="AAZ87210"/>
    </conflict>
    <text>Extended N-terminus.</text>
</comment>
<reference key="1">
    <citation type="journal article" date="2005" name="Nucleic Acids Res.">
        <title>Genome dynamics and diversity of Shigella species, the etiologic agents of bacillary dysentery.</title>
        <authorList>
            <person name="Yang F."/>
            <person name="Yang J."/>
            <person name="Zhang X."/>
            <person name="Chen L."/>
            <person name="Jiang Y."/>
            <person name="Yan Y."/>
            <person name="Tang X."/>
            <person name="Wang J."/>
            <person name="Xiong Z."/>
            <person name="Dong J."/>
            <person name="Xue Y."/>
            <person name="Zhu Y."/>
            <person name="Xu X."/>
            <person name="Sun L."/>
            <person name="Chen S."/>
            <person name="Nie H."/>
            <person name="Peng J."/>
            <person name="Xu J."/>
            <person name="Wang Y."/>
            <person name="Yuan Z."/>
            <person name="Wen Y."/>
            <person name="Yao Z."/>
            <person name="Shen Y."/>
            <person name="Qiang B."/>
            <person name="Hou Y."/>
            <person name="Yu J."/>
            <person name="Jin Q."/>
        </authorList>
    </citation>
    <scope>NUCLEOTIDE SEQUENCE [LARGE SCALE GENOMIC DNA]</scope>
    <source>
        <strain>Ss046</strain>
    </source>
</reference>
<sequence length="272" mass="30329">MARLAAFDMDGTLLMPDHHLGEKTLSTLARLRERDITLTFATGRHALEMQHILGALSLDAYLITGNGTRVHSLEGELLHRDDLPADVAELVLYQQWDTRASMHIFNDDGWFTGKEIPALLQAFVYSGFRYQIIDVKKMPLGSVTKICFCGDHDDLTRLQIQLYEALGERAHLCFSATDCLEVLPVGCNKGAALTVLTQHLGLSLRDCMAFGDAMNDREMLGSVGSGFIMGNAMPQLRAELPHLPVIGHCRNQAVSHYLTHWLDYPHLPYSPE</sequence>
<keyword id="KW-0378">Hydrolase</keyword>
<keyword id="KW-0460">Magnesium</keyword>
<keyword id="KW-0479">Metal-binding</keyword>
<keyword id="KW-1185">Reference proteome</keyword>